<comment type="function">
    <text>Acts as a sensor for nitrate/nitrite and transduces signal of nitrate/nitrite availability to the NarL/NarP proteins. NarQ probably activates NarL and NarP by phosphorylation. NarQ probably negatively regulates the NarL protein by dephosphorylation.</text>
</comment>
<comment type="catalytic activity">
    <reaction>
        <text>ATP + protein L-histidine = ADP + protein N-phospho-L-histidine.</text>
        <dbReference type="EC" id="2.7.13.3"/>
    </reaction>
</comment>
<comment type="subcellular location">
    <subcellularLocation>
        <location evidence="4">Cell inner membrane</location>
        <topology evidence="4">Multi-pass membrane protein</topology>
    </subcellularLocation>
</comment>
<organism>
    <name type="scientific">Escherichia coli (strain K12)</name>
    <dbReference type="NCBI Taxonomy" id="83333"/>
    <lineage>
        <taxon>Bacteria</taxon>
        <taxon>Pseudomonadati</taxon>
        <taxon>Pseudomonadota</taxon>
        <taxon>Gammaproteobacteria</taxon>
        <taxon>Enterobacterales</taxon>
        <taxon>Enterobacteriaceae</taxon>
        <taxon>Escherichia</taxon>
    </lineage>
</organism>
<evidence type="ECO:0000255" key="1"/>
<evidence type="ECO:0000255" key="2">
    <source>
        <dbReference type="PROSITE-ProRule" id="PRU00102"/>
    </source>
</evidence>
<evidence type="ECO:0000255" key="3">
    <source>
        <dbReference type="PROSITE-ProRule" id="PRU00107"/>
    </source>
</evidence>
<evidence type="ECO:0000269" key="4">
    <source>
    </source>
</evidence>
<evidence type="ECO:0007829" key="5">
    <source>
        <dbReference type="PDB" id="5JEQ"/>
    </source>
</evidence>
<name>NARQ_ECOLI</name>
<proteinExistence type="evidence at protein level"/>
<gene>
    <name type="primary">narQ</name>
    <name type="ordered locus">b2469</name>
    <name type="ordered locus">JW2453</name>
</gene>
<protein>
    <recommendedName>
        <fullName>Nitrate/nitrite sensor protein NarQ</fullName>
        <ecNumber>2.7.13.3</ecNumber>
    </recommendedName>
</protein>
<accession>P27896</accession>
<reference key="1">
    <citation type="journal article" date="1992" name="Proc. Natl. Acad. Sci. U.S.A.">
        <title>Either of two functionally redundant sensor proteins, NarX and NarQ, is sufficient for nitrate regulation in Escherichia coli K-12.</title>
        <authorList>
            <person name="Rabin R.S."/>
            <person name="Stewart V."/>
        </authorList>
    </citation>
    <scope>NUCLEOTIDE SEQUENCE [GENOMIC DNA]</scope>
    <source>
        <strain>K12</strain>
    </source>
</reference>
<reference key="2">
    <citation type="journal article" date="1992" name="Mol. Microbiol.">
        <title>Identification and characterization of narQ, a second nitrate sensor for nitrate-dependent gene regulation in Escherichia coli.</title>
        <authorList>
            <person name="Chiang R.C."/>
            <person name="Cavicchioli R."/>
            <person name="Gunsalus R.P."/>
        </authorList>
    </citation>
    <scope>NUCLEOTIDE SEQUENCE [GENOMIC DNA]</scope>
    <source>
        <strain>K12 / MC4100 / ATCC 35695 / DSM 6574</strain>
    </source>
</reference>
<reference key="3">
    <citation type="journal article" date="1997" name="DNA Res.">
        <title>Construction of a contiguous 874-kb sequence of the Escherichia coli-K12 genome corresponding to 50.0-68.8 min on the linkage map and analysis of its sequence features.</title>
        <authorList>
            <person name="Yamamoto Y."/>
            <person name="Aiba H."/>
            <person name="Baba T."/>
            <person name="Hayashi K."/>
            <person name="Inada T."/>
            <person name="Isono K."/>
            <person name="Itoh T."/>
            <person name="Kimura S."/>
            <person name="Kitagawa M."/>
            <person name="Makino K."/>
            <person name="Miki T."/>
            <person name="Mitsuhashi N."/>
            <person name="Mizobuchi K."/>
            <person name="Mori H."/>
            <person name="Nakade S."/>
            <person name="Nakamura Y."/>
            <person name="Nashimoto H."/>
            <person name="Oshima T."/>
            <person name="Oyama S."/>
            <person name="Saito N."/>
            <person name="Sampei G."/>
            <person name="Satoh Y."/>
            <person name="Sivasundaram S."/>
            <person name="Tagami H."/>
            <person name="Takahashi H."/>
            <person name="Takeda J."/>
            <person name="Takemoto K."/>
            <person name="Uehara K."/>
            <person name="Wada C."/>
            <person name="Yamagata S."/>
            <person name="Horiuchi T."/>
        </authorList>
    </citation>
    <scope>NUCLEOTIDE SEQUENCE [LARGE SCALE GENOMIC DNA]</scope>
    <source>
        <strain>K12 / W3110 / ATCC 27325 / DSM 5911</strain>
    </source>
</reference>
<reference key="4">
    <citation type="journal article" date="1997" name="Science">
        <title>The complete genome sequence of Escherichia coli K-12.</title>
        <authorList>
            <person name="Blattner F.R."/>
            <person name="Plunkett G. III"/>
            <person name="Bloch C.A."/>
            <person name="Perna N.T."/>
            <person name="Burland V."/>
            <person name="Riley M."/>
            <person name="Collado-Vides J."/>
            <person name="Glasner J.D."/>
            <person name="Rode C.K."/>
            <person name="Mayhew G.F."/>
            <person name="Gregor J."/>
            <person name="Davis N.W."/>
            <person name="Kirkpatrick H.A."/>
            <person name="Goeden M.A."/>
            <person name="Rose D.J."/>
            <person name="Mau B."/>
            <person name="Shao Y."/>
        </authorList>
    </citation>
    <scope>NUCLEOTIDE SEQUENCE [LARGE SCALE GENOMIC DNA]</scope>
    <source>
        <strain>K12 / MG1655 / ATCC 47076</strain>
    </source>
</reference>
<reference key="5">
    <citation type="journal article" date="2006" name="Mol. Syst. Biol.">
        <title>Highly accurate genome sequences of Escherichia coli K-12 strains MG1655 and W3110.</title>
        <authorList>
            <person name="Hayashi K."/>
            <person name="Morooka N."/>
            <person name="Yamamoto Y."/>
            <person name="Fujita K."/>
            <person name="Isono K."/>
            <person name="Choi S."/>
            <person name="Ohtsubo E."/>
            <person name="Baba T."/>
            <person name="Wanner B.L."/>
            <person name="Mori H."/>
            <person name="Horiuchi T."/>
        </authorList>
    </citation>
    <scope>NUCLEOTIDE SEQUENCE [LARGE SCALE GENOMIC DNA]</scope>
    <source>
        <strain>K12 / W3110 / ATCC 27325 / DSM 5911</strain>
    </source>
</reference>
<reference key="6">
    <citation type="submission" date="1994-07" db="EMBL/GenBank/DDBJ databases">
        <authorList>
            <person name="Nilles M.L."/>
            <person name="Bertrand K.P."/>
        </authorList>
    </citation>
    <scope>NUCLEOTIDE SEQUENCE [GENOMIC DNA] OF 547-566</scope>
    <source>
        <strain>K12</strain>
    </source>
</reference>
<reference key="7">
    <citation type="journal article" date="2005" name="Science">
        <title>Global topology analysis of the Escherichia coli inner membrane proteome.</title>
        <authorList>
            <person name="Daley D.O."/>
            <person name="Rapp M."/>
            <person name="Granseth E."/>
            <person name="Melen K."/>
            <person name="Drew D."/>
            <person name="von Heijne G."/>
        </authorList>
    </citation>
    <scope>SUBCELLULAR LOCATION</scope>
    <source>
        <strain>K12 / MG1655 / ATCC 47076</strain>
    </source>
</reference>
<dbReference type="EC" id="2.7.13.3"/>
<dbReference type="EMBL" id="M94724">
    <property type="protein sequence ID" value="AAA24202.1"/>
    <property type="molecule type" value="Genomic_DNA"/>
</dbReference>
<dbReference type="EMBL" id="X65714">
    <property type="protein sequence ID" value="CAA46630.1"/>
    <property type="molecule type" value="Genomic_DNA"/>
</dbReference>
<dbReference type="EMBL" id="U00096">
    <property type="protein sequence ID" value="AAC75522.1"/>
    <property type="molecule type" value="Genomic_DNA"/>
</dbReference>
<dbReference type="EMBL" id="AP009048">
    <property type="protein sequence ID" value="BAA16343.1"/>
    <property type="molecule type" value="Genomic_DNA"/>
</dbReference>
<dbReference type="EMBL" id="U12598">
    <property type="protein sequence ID" value="AAA20583.1"/>
    <property type="molecule type" value="Genomic_DNA"/>
</dbReference>
<dbReference type="PIR" id="D65022">
    <property type="entry name" value="D65022"/>
</dbReference>
<dbReference type="RefSeq" id="NP_416964.1">
    <property type="nucleotide sequence ID" value="NC_000913.3"/>
</dbReference>
<dbReference type="RefSeq" id="WP_001300881.1">
    <property type="nucleotide sequence ID" value="NZ_JACEFS010000004.1"/>
</dbReference>
<dbReference type="PDB" id="5IJI">
    <property type="method" value="X-ray"/>
    <property type="resolution" value="1.94 A"/>
    <property type="chains" value="A=1-230"/>
</dbReference>
<dbReference type="PDB" id="5JEF">
    <property type="method" value="X-ray"/>
    <property type="resolution" value="2.42 A"/>
    <property type="chains" value="A/B=1-230"/>
</dbReference>
<dbReference type="PDB" id="5JEQ">
    <property type="method" value="X-ray"/>
    <property type="resolution" value="1.90 A"/>
    <property type="chains" value="A=1-230"/>
</dbReference>
<dbReference type="PDB" id="5JGP">
    <property type="method" value="X-ray"/>
    <property type="resolution" value="2.70 A"/>
    <property type="chains" value="A=1-230"/>
</dbReference>
<dbReference type="PDB" id="6XYN">
    <property type="method" value="X-ray"/>
    <property type="resolution" value="2.30 A"/>
    <property type="chains" value="A=1-230"/>
</dbReference>
<dbReference type="PDB" id="6YUE">
    <property type="method" value="X-ray"/>
    <property type="resolution" value="2.40 A"/>
    <property type="chains" value="A=1-230"/>
</dbReference>
<dbReference type="PDBsum" id="5IJI"/>
<dbReference type="PDBsum" id="5JEF"/>
<dbReference type="PDBsum" id="5JEQ"/>
<dbReference type="PDBsum" id="5JGP"/>
<dbReference type="PDBsum" id="6XYN"/>
<dbReference type="PDBsum" id="6YUE"/>
<dbReference type="SMR" id="P27896"/>
<dbReference type="BioGRID" id="4260928">
    <property type="interactions" value="22"/>
</dbReference>
<dbReference type="BioGRID" id="851287">
    <property type="interactions" value="2"/>
</dbReference>
<dbReference type="DIP" id="DIP-10318N"/>
<dbReference type="FunCoup" id="P27896">
    <property type="interactions" value="244"/>
</dbReference>
<dbReference type="IntAct" id="P27896">
    <property type="interactions" value="12"/>
</dbReference>
<dbReference type="STRING" id="511145.b2469"/>
<dbReference type="PaxDb" id="511145-b2469"/>
<dbReference type="EnsemblBacteria" id="AAC75522">
    <property type="protein sequence ID" value="AAC75522"/>
    <property type="gene ID" value="b2469"/>
</dbReference>
<dbReference type="GeneID" id="946948"/>
<dbReference type="KEGG" id="ecj:JW2453"/>
<dbReference type="KEGG" id="eco:b2469"/>
<dbReference type="KEGG" id="ecoc:C3026_13695"/>
<dbReference type="PATRIC" id="fig|511145.12.peg.2563"/>
<dbReference type="EchoBASE" id="EB1429"/>
<dbReference type="eggNOG" id="COG3850">
    <property type="taxonomic scope" value="Bacteria"/>
</dbReference>
<dbReference type="HOGENOM" id="CLU_000445_20_10_6"/>
<dbReference type="InParanoid" id="P27896"/>
<dbReference type="OMA" id="PRAQIDN"/>
<dbReference type="OrthoDB" id="9811306at2"/>
<dbReference type="PhylomeDB" id="P27896"/>
<dbReference type="BioCyc" id="EcoCyc:NARQ-MONOMER"/>
<dbReference type="BioCyc" id="MetaCyc:NARQ-MONOMER"/>
<dbReference type="BRENDA" id="2.7.13.3">
    <property type="organism ID" value="2026"/>
</dbReference>
<dbReference type="PRO" id="PR:P27896"/>
<dbReference type="Proteomes" id="UP000000625">
    <property type="component" value="Chromosome"/>
</dbReference>
<dbReference type="GO" id="GO:0005886">
    <property type="term" value="C:plasma membrane"/>
    <property type="evidence" value="ECO:0000314"/>
    <property type="project" value="EcoCyc"/>
</dbReference>
<dbReference type="GO" id="GO:0005524">
    <property type="term" value="F:ATP binding"/>
    <property type="evidence" value="ECO:0007669"/>
    <property type="project" value="UniProtKB-KW"/>
</dbReference>
<dbReference type="GO" id="GO:0000155">
    <property type="term" value="F:phosphorelay sensor kinase activity"/>
    <property type="evidence" value="ECO:0000315"/>
    <property type="project" value="EcoCyc"/>
</dbReference>
<dbReference type="GO" id="GO:0046983">
    <property type="term" value="F:protein dimerization activity"/>
    <property type="evidence" value="ECO:0007669"/>
    <property type="project" value="InterPro"/>
</dbReference>
<dbReference type="GO" id="GO:0071249">
    <property type="term" value="P:cellular response to nitrate"/>
    <property type="evidence" value="ECO:0000315"/>
    <property type="project" value="EcoCyc"/>
</dbReference>
<dbReference type="GO" id="GO:0071250">
    <property type="term" value="P:cellular response to nitrite"/>
    <property type="evidence" value="ECO:0000315"/>
    <property type="project" value="EcoCyc"/>
</dbReference>
<dbReference type="GO" id="GO:0042128">
    <property type="term" value="P:nitrate assimilation"/>
    <property type="evidence" value="ECO:0007669"/>
    <property type="project" value="UniProtKB-KW"/>
</dbReference>
<dbReference type="GO" id="GO:0007165">
    <property type="term" value="P:signal transduction"/>
    <property type="evidence" value="ECO:0000315"/>
    <property type="project" value="EcoCyc"/>
</dbReference>
<dbReference type="CDD" id="cd06225">
    <property type="entry name" value="HAMP"/>
    <property type="match status" value="1"/>
</dbReference>
<dbReference type="CDD" id="cd16917">
    <property type="entry name" value="HATPase_UhpB-NarQ-NarX-like"/>
    <property type="match status" value="1"/>
</dbReference>
<dbReference type="CDD" id="cd22899">
    <property type="entry name" value="NarQ_sensor"/>
    <property type="match status" value="1"/>
</dbReference>
<dbReference type="FunFam" id="1.20.5.1930:FF:000003">
    <property type="entry name" value="Sensor protein"/>
    <property type="match status" value="1"/>
</dbReference>
<dbReference type="FunFam" id="3.30.565.10:FF:000058">
    <property type="entry name" value="Sensor protein"/>
    <property type="match status" value="1"/>
</dbReference>
<dbReference type="Gene3D" id="1.10.287.130">
    <property type="match status" value="1"/>
</dbReference>
<dbReference type="Gene3D" id="1.20.5.1930">
    <property type="match status" value="1"/>
</dbReference>
<dbReference type="Gene3D" id="1.20.120.960">
    <property type="entry name" value="Histidine kinase NarX, sensor domain"/>
    <property type="match status" value="1"/>
</dbReference>
<dbReference type="Gene3D" id="3.30.565.10">
    <property type="entry name" value="Histidine kinase-like ATPase, C-terminal domain"/>
    <property type="match status" value="1"/>
</dbReference>
<dbReference type="InterPro" id="IPR003660">
    <property type="entry name" value="HAMP_dom"/>
</dbReference>
<dbReference type="InterPro" id="IPR036890">
    <property type="entry name" value="HATPase_C_sf"/>
</dbReference>
<dbReference type="InterPro" id="IPR005467">
    <property type="entry name" value="His_kinase_dom"/>
</dbReference>
<dbReference type="InterPro" id="IPR029095">
    <property type="entry name" value="NarX-like_N"/>
</dbReference>
<dbReference type="InterPro" id="IPR042295">
    <property type="entry name" value="NarX-like_N_sf"/>
</dbReference>
<dbReference type="InterPro" id="IPR050482">
    <property type="entry name" value="Sensor_HK_TwoCompSys"/>
</dbReference>
<dbReference type="InterPro" id="IPR016380">
    <property type="entry name" value="Sig_transdc_His_kin_NarX/NarQ"/>
</dbReference>
<dbReference type="InterPro" id="IPR011712">
    <property type="entry name" value="Sig_transdc_His_kin_sub3_dim/P"/>
</dbReference>
<dbReference type="NCBIfam" id="NF008184">
    <property type="entry name" value="PRK10935.1"/>
    <property type="match status" value="1"/>
</dbReference>
<dbReference type="PANTHER" id="PTHR24421">
    <property type="entry name" value="NITRATE/NITRITE SENSOR PROTEIN NARX-RELATED"/>
    <property type="match status" value="1"/>
</dbReference>
<dbReference type="PANTHER" id="PTHR24421:SF10">
    <property type="entry name" value="NITRATE_NITRITE SENSOR PROTEIN NARQ"/>
    <property type="match status" value="1"/>
</dbReference>
<dbReference type="Pfam" id="PF00672">
    <property type="entry name" value="HAMP"/>
    <property type="match status" value="1"/>
</dbReference>
<dbReference type="Pfam" id="PF02518">
    <property type="entry name" value="HATPase_c"/>
    <property type="match status" value="1"/>
</dbReference>
<dbReference type="Pfam" id="PF07730">
    <property type="entry name" value="HisKA_3"/>
    <property type="match status" value="1"/>
</dbReference>
<dbReference type="Pfam" id="PF13675">
    <property type="entry name" value="PilJ"/>
    <property type="match status" value="1"/>
</dbReference>
<dbReference type="PIRSF" id="PIRSF003167">
    <property type="entry name" value="STHK_NarX/NarQ"/>
    <property type="match status" value="1"/>
</dbReference>
<dbReference type="SMART" id="SM00304">
    <property type="entry name" value="HAMP"/>
    <property type="match status" value="1"/>
</dbReference>
<dbReference type="SMART" id="SM00387">
    <property type="entry name" value="HATPase_c"/>
    <property type="match status" value="1"/>
</dbReference>
<dbReference type="SUPFAM" id="SSF55874">
    <property type="entry name" value="ATPase domain of HSP90 chaperone/DNA topoisomerase II/histidine kinase"/>
    <property type="match status" value="1"/>
</dbReference>
<dbReference type="SUPFAM" id="SSF158472">
    <property type="entry name" value="HAMP domain-like"/>
    <property type="match status" value="1"/>
</dbReference>
<dbReference type="PROSITE" id="PS50885">
    <property type="entry name" value="HAMP"/>
    <property type="match status" value="1"/>
</dbReference>
<dbReference type="PROSITE" id="PS50109">
    <property type="entry name" value="HIS_KIN"/>
    <property type="match status" value="1"/>
</dbReference>
<keyword id="KW-0002">3D-structure</keyword>
<keyword id="KW-0067">ATP-binding</keyword>
<keyword id="KW-0997">Cell inner membrane</keyword>
<keyword id="KW-1003">Cell membrane</keyword>
<keyword id="KW-0418">Kinase</keyword>
<keyword id="KW-0472">Membrane</keyword>
<keyword id="KW-0534">Nitrate assimilation</keyword>
<keyword id="KW-0547">Nucleotide-binding</keyword>
<keyword id="KW-0597">Phosphoprotein</keyword>
<keyword id="KW-1185">Reference proteome</keyword>
<keyword id="KW-0808">Transferase</keyword>
<keyword id="KW-0812">Transmembrane</keyword>
<keyword id="KW-1133">Transmembrane helix</keyword>
<keyword id="KW-0902">Two-component regulatory system</keyword>
<feature type="chain" id="PRO_0000074810" description="Nitrate/nitrite sensor protein NarQ">
    <location>
        <begin position="1"/>
        <end position="566"/>
    </location>
</feature>
<feature type="topological domain" description="Cytoplasmic" evidence="1">
    <location>
        <begin position="1"/>
        <end position="13"/>
    </location>
</feature>
<feature type="transmembrane region" description="Helical" evidence="1">
    <location>
        <begin position="14"/>
        <end position="34"/>
    </location>
</feature>
<feature type="topological domain" description="Periplasmic" evidence="1">
    <location>
        <begin position="35"/>
        <end position="146"/>
    </location>
</feature>
<feature type="transmembrane region" description="Helical" evidence="1">
    <location>
        <begin position="147"/>
        <end position="167"/>
    </location>
</feature>
<feature type="topological domain" description="Cytoplasmic" evidence="1">
    <location>
        <begin position="168"/>
        <end position="566"/>
    </location>
</feature>
<feature type="domain" description="HAMP" evidence="2">
    <location>
        <begin position="174"/>
        <end position="227"/>
    </location>
</feature>
<feature type="domain" description="Histidine kinase" evidence="3">
    <location>
        <begin position="364"/>
        <end position="559"/>
    </location>
</feature>
<feature type="modified residue" description="Phosphohistidine; by autocatalysis" evidence="3">
    <location>
        <position position="370"/>
    </location>
</feature>
<feature type="helix" evidence="5">
    <location>
        <begin position="7"/>
        <end position="62"/>
    </location>
</feature>
<feature type="helix" evidence="5">
    <location>
        <begin position="67"/>
        <end position="78"/>
    </location>
</feature>
<feature type="helix" evidence="5">
    <location>
        <begin position="81"/>
        <end position="84"/>
    </location>
</feature>
<feature type="helix" evidence="5">
    <location>
        <begin position="93"/>
        <end position="114"/>
    </location>
</feature>
<feature type="helix" evidence="5">
    <location>
        <begin position="118"/>
        <end position="175"/>
    </location>
</feature>
<feature type="helix" evidence="5">
    <location>
        <begin position="177"/>
        <end position="191"/>
    </location>
</feature>
<feature type="helix" evidence="5">
    <location>
        <begin position="207"/>
        <end position="227"/>
    </location>
</feature>
<sequence length="566" mass="63697">MIVKRPVSASLARAFFYIVLLSILSTGIALLTLASSLRDAEAINIAGSLRMQSYRLGYDLQSGSPQLNAHRQLFQQALHSPVLTNLNVWYVPEAVKTRYAHLNANWLEMNNRLSKGDLPWYQANINNYVNQIDLFVLALQHYAERKMLLVVAISLAGGIGIFTLVFFTLRRIRHQVVAPLNQLVTASQRIEHGQFDSPPLDTNLPNELGLLAKTFNQMSSELHKLYRSLEASVEEKTRDLHEAKRRLEVLYQCSQALNTSQIDVHCFRHILQIVRDNEAAEYLELNVGENWRISEGQPNPELPMQILPVTMQETVYGELHWQNSHVSSSEPLLNSVSSMLGRGLYFNQAQKHFQQLLLMEERATIARELHDSLAQVLSYLRIQLTLLKRSIPEDNATAQSIMADFSQALNDAYRQLRELLTTFRLTLQQADLPSALREMLDTLQNQTSAKLTLDCRLPTLALDAQMQVHLLQIIREAVLNAMKHANASEIAVSCVTAPDGNHTVYIRDNGIGIGEPKEPEGHYGLNIMRERAERLGGTLTFSQPSGGGTLVSISFRSAEGEESQLM</sequence>